<name>G3P2_CAEBR</name>
<protein>
    <recommendedName>
        <fullName evidence="1">Glyceraldehyde-3-phosphate dehydrogenase 2</fullName>
        <shortName evidence="1">GAPDH-2</shortName>
        <ecNumber evidence="1">1.2.1.12</ecNumber>
    </recommendedName>
</protein>
<proteinExistence type="inferred from homology"/>
<accession>P32809</accession>
<accession>A8XJE1</accession>
<dbReference type="EC" id="1.2.1.12" evidence="1"/>
<dbReference type="EMBL" id="M86669">
    <property type="status" value="NOT_ANNOTATED_CDS"/>
    <property type="molecule type" value="Genomic_DNA"/>
</dbReference>
<dbReference type="EMBL" id="HE600983">
    <property type="protein sequence ID" value="CAP32766.1"/>
    <property type="molecule type" value="Genomic_DNA"/>
</dbReference>
<dbReference type="PIR" id="JH0769">
    <property type="entry name" value="JH0769"/>
</dbReference>
<dbReference type="SMR" id="P32809"/>
<dbReference type="FunCoup" id="P32809">
    <property type="interactions" value="625"/>
</dbReference>
<dbReference type="STRING" id="6238.P32809"/>
<dbReference type="EnsemblMetazoa" id="CBG14137.1">
    <property type="protein sequence ID" value="CBG14137.1"/>
    <property type="gene ID" value="WBGene00000332"/>
</dbReference>
<dbReference type="KEGG" id="cbr:CBG_14137"/>
<dbReference type="CTD" id="8586323"/>
<dbReference type="WormBase" id="CBG14137">
    <property type="protein sequence ID" value="CBP18173"/>
    <property type="gene ID" value="WBGene00000332"/>
    <property type="gene designation" value="Cbr-gpd-3.2"/>
</dbReference>
<dbReference type="eggNOG" id="KOG0657">
    <property type="taxonomic scope" value="Eukaryota"/>
</dbReference>
<dbReference type="HOGENOM" id="CLU_030140_0_3_1"/>
<dbReference type="InParanoid" id="P32809"/>
<dbReference type="OMA" id="YGYTCNM"/>
<dbReference type="OrthoDB" id="1152826at2759"/>
<dbReference type="UniPathway" id="UPA00109">
    <property type="reaction ID" value="UER00184"/>
</dbReference>
<dbReference type="Proteomes" id="UP000008549">
    <property type="component" value="Unassembled WGS sequence"/>
</dbReference>
<dbReference type="GO" id="GO:0005829">
    <property type="term" value="C:cytosol"/>
    <property type="evidence" value="ECO:0000318"/>
    <property type="project" value="GO_Central"/>
</dbReference>
<dbReference type="GO" id="GO:0004365">
    <property type="term" value="F:glyceraldehyde-3-phosphate dehydrogenase (NAD+) (phosphorylating) activity"/>
    <property type="evidence" value="ECO:0000318"/>
    <property type="project" value="GO_Central"/>
</dbReference>
<dbReference type="GO" id="GO:0051287">
    <property type="term" value="F:NAD binding"/>
    <property type="evidence" value="ECO:0007669"/>
    <property type="project" value="InterPro"/>
</dbReference>
<dbReference type="GO" id="GO:0050661">
    <property type="term" value="F:NADP binding"/>
    <property type="evidence" value="ECO:0007669"/>
    <property type="project" value="InterPro"/>
</dbReference>
<dbReference type="GO" id="GO:0006006">
    <property type="term" value="P:glucose metabolic process"/>
    <property type="evidence" value="ECO:0007669"/>
    <property type="project" value="InterPro"/>
</dbReference>
<dbReference type="GO" id="GO:0006096">
    <property type="term" value="P:glycolytic process"/>
    <property type="evidence" value="ECO:0000318"/>
    <property type="project" value="GO_Central"/>
</dbReference>
<dbReference type="CDD" id="cd18126">
    <property type="entry name" value="GAPDH_I_C"/>
    <property type="match status" value="1"/>
</dbReference>
<dbReference type="CDD" id="cd05214">
    <property type="entry name" value="GAPDH_I_N"/>
    <property type="match status" value="1"/>
</dbReference>
<dbReference type="FunFam" id="3.30.360.10:FF:000001">
    <property type="entry name" value="Glyceraldehyde-3-phosphate dehydrogenase"/>
    <property type="match status" value="1"/>
</dbReference>
<dbReference type="FunFam" id="3.40.50.720:FF:000266">
    <property type="entry name" value="Glyceraldehyde-3-phosphate dehydrogenase"/>
    <property type="match status" value="1"/>
</dbReference>
<dbReference type="Gene3D" id="3.30.360.10">
    <property type="entry name" value="Dihydrodipicolinate Reductase, domain 2"/>
    <property type="match status" value="1"/>
</dbReference>
<dbReference type="Gene3D" id="3.40.50.720">
    <property type="entry name" value="NAD(P)-binding Rossmann-like Domain"/>
    <property type="match status" value="1"/>
</dbReference>
<dbReference type="InterPro" id="IPR020831">
    <property type="entry name" value="GlycerAld/Erythrose_P_DH"/>
</dbReference>
<dbReference type="InterPro" id="IPR020830">
    <property type="entry name" value="GlycerAld_3-P_DH_AS"/>
</dbReference>
<dbReference type="InterPro" id="IPR020829">
    <property type="entry name" value="GlycerAld_3-P_DH_cat"/>
</dbReference>
<dbReference type="InterPro" id="IPR020828">
    <property type="entry name" value="GlycerAld_3-P_DH_NAD(P)-bd"/>
</dbReference>
<dbReference type="InterPro" id="IPR006424">
    <property type="entry name" value="Glyceraldehyde-3-P_DH_1"/>
</dbReference>
<dbReference type="InterPro" id="IPR036291">
    <property type="entry name" value="NAD(P)-bd_dom_sf"/>
</dbReference>
<dbReference type="NCBIfam" id="TIGR01534">
    <property type="entry name" value="GAPDH-I"/>
    <property type="match status" value="1"/>
</dbReference>
<dbReference type="PANTHER" id="PTHR10836">
    <property type="entry name" value="GLYCERALDEHYDE 3-PHOSPHATE DEHYDROGENASE"/>
    <property type="match status" value="1"/>
</dbReference>
<dbReference type="PANTHER" id="PTHR10836:SF76">
    <property type="entry name" value="GLYCERALDEHYDE-3-PHOSPHATE DEHYDROGENASE-RELATED"/>
    <property type="match status" value="1"/>
</dbReference>
<dbReference type="Pfam" id="PF02800">
    <property type="entry name" value="Gp_dh_C"/>
    <property type="match status" value="1"/>
</dbReference>
<dbReference type="Pfam" id="PF00044">
    <property type="entry name" value="Gp_dh_N"/>
    <property type="match status" value="1"/>
</dbReference>
<dbReference type="PIRSF" id="PIRSF000149">
    <property type="entry name" value="GAP_DH"/>
    <property type="match status" value="1"/>
</dbReference>
<dbReference type="PRINTS" id="PR00078">
    <property type="entry name" value="G3PDHDRGNASE"/>
</dbReference>
<dbReference type="SMART" id="SM00846">
    <property type="entry name" value="Gp_dh_N"/>
    <property type="match status" value="1"/>
</dbReference>
<dbReference type="SUPFAM" id="SSF55347">
    <property type="entry name" value="Glyceraldehyde-3-phosphate dehydrogenase-like, C-terminal domain"/>
    <property type="match status" value="1"/>
</dbReference>
<dbReference type="SUPFAM" id="SSF51735">
    <property type="entry name" value="NAD(P)-binding Rossmann-fold domains"/>
    <property type="match status" value="1"/>
</dbReference>
<dbReference type="PROSITE" id="PS00071">
    <property type="entry name" value="GAPDH"/>
    <property type="match status" value="1"/>
</dbReference>
<feature type="chain" id="PRO_0000145508" description="Glyceraldehyde-3-phosphate dehydrogenase 2">
    <location>
        <begin position="1"/>
        <end position="341"/>
    </location>
</feature>
<feature type="active site" description="Nucleophile" evidence="5">
    <location>
        <position position="158"/>
    </location>
</feature>
<feature type="binding site" evidence="3">
    <location>
        <begin position="13"/>
        <end position="14"/>
    </location>
    <ligand>
        <name>NAD(+)</name>
        <dbReference type="ChEBI" id="CHEBI:57540"/>
    </ligand>
</feature>
<feature type="binding site" evidence="3">
    <location>
        <position position="35"/>
    </location>
    <ligand>
        <name>NAD(+)</name>
        <dbReference type="ChEBI" id="CHEBI:57540"/>
    </ligand>
</feature>
<feature type="binding site" evidence="3">
    <location>
        <position position="85"/>
    </location>
    <ligand>
        <name>NAD(+)</name>
        <dbReference type="ChEBI" id="CHEBI:57540"/>
    </ligand>
</feature>
<feature type="binding site" evidence="4">
    <location>
        <begin position="157"/>
        <end position="159"/>
    </location>
    <ligand>
        <name>D-glyceraldehyde 3-phosphate</name>
        <dbReference type="ChEBI" id="CHEBI:59776"/>
    </ligand>
</feature>
<feature type="binding site" evidence="2">
    <location>
        <position position="188"/>
    </location>
    <ligand>
        <name>D-glyceraldehyde 3-phosphate</name>
        <dbReference type="ChEBI" id="CHEBI:59776"/>
    </ligand>
</feature>
<feature type="binding site" evidence="4">
    <location>
        <begin position="217"/>
        <end position="218"/>
    </location>
    <ligand>
        <name>D-glyceraldehyde 3-phosphate</name>
        <dbReference type="ChEBI" id="CHEBI:59776"/>
    </ligand>
</feature>
<feature type="binding site" evidence="4">
    <location>
        <position position="240"/>
    </location>
    <ligand>
        <name>D-glyceraldehyde 3-phosphate</name>
        <dbReference type="ChEBI" id="CHEBI:59776"/>
    </ligand>
</feature>
<feature type="binding site" evidence="4">
    <location>
        <position position="322"/>
    </location>
    <ligand>
        <name>NAD(+)</name>
        <dbReference type="ChEBI" id="CHEBI:57540"/>
    </ligand>
</feature>
<feature type="site" description="Activates thiol group during catalysis" evidence="4">
    <location>
        <position position="185"/>
    </location>
</feature>
<comment type="catalytic activity">
    <reaction evidence="5">
        <text>D-glyceraldehyde 3-phosphate + phosphate + NAD(+) = (2R)-3-phospho-glyceroyl phosphate + NADH + H(+)</text>
        <dbReference type="Rhea" id="RHEA:10300"/>
        <dbReference type="ChEBI" id="CHEBI:15378"/>
        <dbReference type="ChEBI" id="CHEBI:43474"/>
        <dbReference type="ChEBI" id="CHEBI:57540"/>
        <dbReference type="ChEBI" id="CHEBI:57604"/>
        <dbReference type="ChEBI" id="CHEBI:57945"/>
        <dbReference type="ChEBI" id="CHEBI:59776"/>
        <dbReference type="EC" id="1.2.1.12"/>
    </reaction>
</comment>
<comment type="pathway">
    <text evidence="6">Carbohydrate degradation; glycolysis; pyruvate from D-glyceraldehyde 3-phosphate: step 1/5.</text>
</comment>
<comment type="subunit">
    <text evidence="3">Homotetramer.</text>
</comment>
<comment type="subcellular location">
    <subcellularLocation>
        <location evidence="3">Cytoplasm</location>
    </subcellularLocation>
</comment>
<comment type="similarity">
    <text evidence="6">Belongs to the glyceraldehyde-3-phosphate dehydrogenase family.</text>
</comment>
<keyword id="KW-0963">Cytoplasm</keyword>
<keyword id="KW-0324">Glycolysis</keyword>
<keyword id="KW-0520">NAD</keyword>
<keyword id="KW-0560">Oxidoreductase</keyword>
<keyword id="KW-1185">Reference proteome</keyword>
<gene>
    <name evidence="7" type="primary">gpd-3.2</name>
    <name evidence="7" type="synonym">gpd-2</name>
    <name evidence="7" type="ORF">CBG14137</name>
</gene>
<evidence type="ECO:0000250" key="1">
    <source>
        <dbReference type="UniProtKB" id="E3VWI2"/>
    </source>
</evidence>
<evidence type="ECO:0000250" key="2">
    <source>
        <dbReference type="UniProtKB" id="P00362"/>
    </source>
</evidence>
<evidence type="ECO:0000250" key="3">
    <source>
        <dbReference type="UniProtKB" id="P04406"/>
    </source>
</evidence>
<evidence type="ECO:0000250" key="4">
    <source>
        <dbReference type="UniProtKB" id="P0A9B2"/>
    </source>
</evidence>
<evidence type="ECO:0000255" key="5">
    <source>
        <dbReference type="PROSITE-ProRule" id="PRU10009"/>
    </source>
</evidence>
<evidence type="ECO:0000305" key="6"/>
<evidence type="ECO:0000312" key="7">
    <source>
        <dbReference type="WormBase" id="CBG14137"/>
    </source>
</evidence>
<sequence length="341" mass="36509">MSKPTVGINGFGRIGRLVLRAAVEKDSVNVVAVNDPFISIDYMVYLFQYDSTHGRFKGTVKHEGDYLIVANEGKSQHKIKVYNSKDPAEIQWGAAGADYVVESTGVFTTIEKANAHLKGGAKKVIISAPSADAPMFVVGVNHEKYDHANDHIISNASCTTNCLAPLAKVINDNFGIIEGLMTTVHAVTATQKTVDGPSGKLWRDGRGAGQNIIPASTGAAKAVGKVIPELNGKLTGMAFRVPTPDVSVVDLTARLEKPASLDDIKRVIKAAAEGPLKGVLAYTEDQVVSTDFVSDTHSSIFDAGASIILNPNFVKLISWYDNEFGYSNRVVDLISYIATKA</sequence>
<organism>
    <name type="scientific">Caenorhabditis briggsae</name>
    <dbReference type="NCBI Taxonomy" id="6238"/>
    <lineage>
        <taxon>Eukaryota</taxon>
        <taxon>Metazoa</taxon>
        <taxon>Ecdysozoa</taxon>
        <taxon>Nematoda</taxon>
        <taxon>Chromadorea</taxon>
        <taxon>Rhabditida</taxon>
        <taxon>Rhabditina</taxon>
        <taxon>Rhabditomorpha</taxon>
        <taxon>Rhabditoidea</taxon>
        <taxon>Rhabditidae</taxon>
        <taxon>Peloderinae</taxon>
        <taxon>Caenorhabditis</taxon>
    </lineage>
</organism>
<reference key="1">
    <citation type="journal article" date="1992" name="Gene">
        <title>Conservation of gene organization and trans-splicing in the glyceraldehyde-3-phosphate dehydrogenase-encoding genes of Caenorhabditis briggsae.</title>
        <authorList>
            <person name="Lee Y.H."/>
            <person name="Huang X.Y."/>
            <person name="Hirsh D."/>
            <person name="Fox G.E."/>
            <person name="Hecht R.M."/>
        </authorList>
    </citation>
    <scope>NUCLEOTIDE SEQUENCE [GENOMIC DNA]</scope>
</reference>
<reference key="2">
    <citation type="journal article" date="2003" name="PLoS Biol.">
        <title>The genome sequence of Caenorhabditis briggsae: a platform for comparative genomics.</title>
        <authorList>
            <person name="Stein L.D."/>
            <person name="Bao Z."/>
            <person name="Blasiar D."/>
            <person name="Blumenthal T."/>
            <person name="Brent M.R."/>
            <person name="Chen N."/>
            <person name="Chinwalla A."/>
            <person name="Clarke L."/>
            <person name="Clee C."/>
            <person name="Coghlan A."/>
            <person name="Coulson A."/>
            <person name="D'Eustachio P."/>
            <person name="Fitch D.H.A."/>
            <person name="Fulton L.A."/>
            <person name="Fulton R.E."/>
            <person name="Griffiths-Jones S."/>
            <person name="Harris T.W."/>
            <person name="Hillier L.W."/>
            <person name="Kamath R."/>
            <person name="Kuwabara P.E."/>
            <person name="Mardis E.R."/>
            <person name="Marra M.A."/>
            <person name="Miner T.L."/>
            <person name="Minx P."/>
            <person name="Mullikin J.C."/>
            <person name="Plumb R.W."/>
            <person name="Rogers J."/>
            <person name="Schein J.E."/>
            <person name="Sohrmann M."/>
            <person name="Spieth J."/>
            <person name="Stajich J.E."/>
            <person name="Wei C."/>
            <person name="Willey D."/>
            <person name="Wilson R.K."/>
            <person name="Durbin R.M."/>
            <person name="Waterston R.H."/>
        </authorList>
    </citation>
    <scope>NUCLEOTIDE SEQUENCE [LARGE SCALE GENOMIC DNA]</scope>
    <source>
        <strain>AF16</strain>
    </source>
</reference>